<comment type="function">
    <text evidence="2">Essential core component of the TIM22 complex, a complex that mediates the import and insertion of multi-pass transmembrane proteins into the mitochondrial inner membrane. In the TIM22 complex, it constitutes the voltage-activated and signal-gated channel. Forms a twin-pore translocase that uses the membrane potential as external driving force in 2 voltage-dependent steps (By similarity).</text>
</comment>
<comment type="subunit">
    <text evidence="2">Component of the TIM22 complex, whose core is composed of TIM22 and TIM54, associated with the 70 kDa heterohexamer composed of TIM9 and TIM10 (or TIM8 and TIM13).</text>
</comment>
<comment type="subcellular location">
    <subcellularLocation>
        <location evidence="2">Mitochondrion inner membrane</location>
        <topology evidence="3">Multi-pass membrane protein</topology>
    </subcellularLocation>
</comment>
<comment type="similarity">
    <text evidence="4">Belongs to the Tim17/Tim22/Tim23 family.</text>
</comment>
<gene>
    <name type="primary">TIM22</name>
    <name type="ordered locus">DEHA2D03872g</name>
</gene>
<keyword id="KW-1015">Disulfide bond</keyword>
<keyword id="KW-0472">Membrane</keyword>
<keyword id="KW-0496">Mitochondrion</keyword>
<keyword id="KW-0999">Mitochondrion inner membrane</keyword>
<keyword id="KW-0653">Protein transport</keyword>
<keyword id="KW-1185">Reference proteome</keyword>
<keyword id="KW-0811">Translocation</keyword>
<keyword id="KW-0812">Transmembrane</keyword>
<keyword id="KW-1133">Transmembrane helix</keyword>
<keyword id="KW-0813">Transport</keyword>
<name>TIM22_DEBHA</name>
<reference key="1">
    <citation type="journal article" date="2004" name="Nature">
        <title>Genome evolution in yeasts.</title>
        <authorList>
            <person name="Dujon B."/>
            <person name="Sherman D."/>
            <person name="Fischer G."/>
            <person name="Durrens P."/>
            <person name="Casaregola S."/>
            <person name="Lafontaine I."/>
            <person name="de Montigny J."/>
            <person name="Marck C."/>
            <person name="Neuveglise C."/>
            <person name="Talla E."/>
            <person name="Goffard N."/>
            <person name="Frangeul L."/>
            <person name="Aigle M."/>
            <person name="Anthouard V."/>
            <person name="Babour A."/>
            <person name="Barbe V."/>
            <person name="Barnay S."/>
            <person name="Blanchin S."/>
            <person name="Beckerich J.-M."/>
            <person name="Beyne E."/>
            <person name="Bleykasten C."/>
            <person name="Boisrame A."/>
            <person name="Boyer J."/>
            <person name="Cattolico L."/>
            <person name="Confanioleri F."/>
            <person name="de Daruvar A."/>
            <person name="Despons L."/>
            <person name="Fabre E."/>
            <person name="Fairhead C."/>
            <person name="Ferry-Dumazet H."/>
            <person name="Groppi A."/>
            <person name="Hantraye F."/>
            <person name="Hennequin C."/>
            <person name="Jauniaux N."/>
            <person name="Joyet P."/>
            <person name="Kachouri R."/>
            <person name="Kerrest A."/>
            <person name="Koszul R."/>
            <person name="Lemaire M."/>
            <person name="Lesur I."/>
            <person name="Ma L."/>
            <person name="Muller H."/>
            <person name="Nicaud J.-M."/>
            <person name="Nikolski M."/>
            <person name="Oztas S."/>
            <person name="Ozier-Kalogeropoulos O."/>
            <person name="Pellenz S."/>
            <person name="Potier S."/>
            <person name="Richard G.-F."/>
            <person name="Straub M.-L."/>
            <person name="Suleau A."/>
            <person name="Swennen D."/>
            <person name="Tekaia F."/>
            <person name="Wesolowski-Louvel M."/>
            <person name="Westhof E."/>
            <person name="Wirth B."/>
            <person name="Zeniou-Meyer M."/>
            <person name="Zivanovic Y."/>
            <person name="Bolotin-Fukuhara M."/>
            <person name="Thierry A."/>
            <person name="Bouchier C."/>
            <person name="Caudron B."/>
            <person name="Scarpelli C."/>
            <person name="Gaillardin C."/>
            <person name="Weissenbach J."/>
            <person name="Wincker P."/>
            <person name="Souciet J.-L."/>
        </authorList>
    </citation>
    <scope>NUCLEOTIDE SEQUENCE [LARGE SCALE GENOMIC DNA]</scope>
    <source>
        <strain>ATCC 36239 / CBS 767 / BCRC 21394 / JCM 1990 / NBRC 0083 / IGC 2968</strain>
    </source>
</reference>
<evidence type="ECO:0000250" key="1">
    <source>
        <dbReference type="UniProtKB" id="A0A1D8PI78"/>
    </source>
</evidence>
<evidence type="ECO:0000250" key="2">
    <source>
        <dbReference type="UniProtKB" id="Q12328"/>
    </source>
</evidence>
<evidence type="ECO:0000255" key="3"/>
<evidence type="ECO:0000305" key="4"/>
<protein>
    <recommendedName>
        <fullName>Mitochondrial import inner membrane translocase subunit TIM22</fullName>
    </recommendedName>
</protein>
<dbReference type="EMBL" id="CR382136">
    <property type="protein sequence ID" value="CAG86774.1"/>
    <property type="molecule type" value="Genomic_DNA"/>
</dbReference>
<dbReference type="RefSeq" id="XP_458635.1">
    <property type="nucleotide sequence ID" value="XM_458635.1"/>
</dbReference>
<dbReference type="SMR" id="Q6BT35"/>
<dbReference type="FunCoup" id="Q6BT35">
    <property type="interactions" value="685"/>
</dbReference>
<dbReference type="STRING" id="284592.Q6BT35"/>
<dbReference type="GeneID" id="2901154"/>
<dbReference type="KEGG" id="dha:DEHA2D03872g"/>
<dbReference type="VEuPathDB" id="FungiDB:DEHA2D03872g"/>
<dbReference type="eggNOG" id="KOG3225">
    <property type="taxonomic scope" value="Eukaryota"/>
</dbReference>
<dbReference type="HOGENOM" id="CLU_091077_1_0_1"/>
<dbReference type="InParanoid" id="Q6BT35"/>
<dbReference type="OMA" id="VNPNMAD"/>
<dbReference type="OrthoDB" id="75343at2759"/>
<dbReference type="Proteomes" id="UP000000599">
    <property type="component" value="Chromosome D"/>
</dbReference>
<dbReference type="GO" id="GO:0042721">
    <property type="term" value="C:TIM22 mitochondrial import inner membrane insertion complex"/>
    <property type="evidence" value="ECO:0007669"/>
    <property type="project" value="EnsemblFungi"/>
</dbReference>
<dbReference type="GO" id="GO:0030943">
    <property type="term" value="F:mitochondrion targeting sequence binding"/>
    <property type="evidence" value="ECO:0007669"/>
    <property type="project" value="EnsemblFungi"/>
</dbReference>
<dbReference type="GO" id="GO:0008320">
    <property type="term" value="F:protein transmembrane transporter activity"/>
    <property type="evidence" value="ECO:0007669"/>
    <property type="project" value="EnsemblFungi"/>
</dbReference>
<dbReference type="GO" id="GO:0005198">
    <property type="term" value="F:structural molecule activity"/>
    <property type="evidence" value="ECO:0007669"/>
    <property type="project" value="EnsemblFungi"/>
</dbReference>
<dbReference type="GO" id="GO:0045039">
    <property type="term" value="P:protein insertion into mitochondrial inner membrane"/>
    <property type="evidence" value="ECO:0007669"/>
    <property type="project" value="EnsemblFungi"/>
</dbReference>
<dbReference type="InterPro" id="IPR039175">
    <property type="entry name" value="TIM22"/>
</dbReference>
<dbReference type="PANTHER" id="PTHR14110">
    <property type="entry name" value="MITOCHONDRIAL IMPORT INNER MEMBRANE TRANSLOCASE SUBUNIT TIM22"/>
    <property type="match status" value="1"/>
</dbReference>
<dbReference type="PANTHER" id="PTHR14110:SF0">
    <property type="entry name" value="MITOCHONDRIAL IMPORT INNER MEMBRANE TRANSLOCASE SUBUNIT TIM22"/>
    <property type="match status" value="1"/>
</dbReference>
<dbReference type="Pfam" id="PF02466">
    <property type="entry name" value="Tim17"/>
    <property type="match status" value="1"/>
</dbReference>
<feature type="chain" id="PRO_0000228090" description="Mitochondrial import inner membrane translocase subunit TIM22">
    <location>
        <begin position="1"/>
        <end position="182"/>
    </location>
</feature>
<feature type="transmembrane region" description="Helical" evidence="3">
    <location>
        <begin position="43"/>
        <end position="63"/>
    </location>
</feature>
<feature type="transmembrane region" description="Helical" evidence="3">
    <location>
        <begin position="127"/>
        <end position="143"/>
    </location>
</feature>
<feature type="transmembrane region" description="Helical" evidence="3">
    <location>
        <begin position="148"/>
        <end position="168"/>
    </location>
</feature>
<feature type="disulfide bond" evidence="1">
    <location>
        <begin position="38"/>
        <end position="116"/>
    </location>
</feature>
<feature type="disulfide bond" evidence="1">
    <location>
        <begin position="135"/>
        <end position="154"/>
    </location>
</feature>
<accession>Q6BT35</accession>
<sequence length="182" mass="19502">MAFGVYKVPEEQKTYAQMTPQEQAEEGAKKMVELMQSCPGKTVMAGVSGFFLGGFFGLFMASMSYDVPIGTNAVSNIRDLPFKQQMKLQFSDMGKRTYSSAKNFGYIGMVYSGVECAIESLRAKHDIYNGVSAGCITGGGLAIRAGPQAALVGCAGFAAFSTAIDLYLRSDSASPPKNDYDE</sequence>
<organism>
    <name type="scientific">Debaryomyces hansenii (strain ATCC 36239 / CBS 767 / BCRC 21394 / JCM 1990 / NBRC 0083 / IGC 2968)</name>
    <name type="common">Yeast</name>
    <name type="synonym">Torulaspora hansenii</name>
    <dbReference type="NCBI Taxonomy" id="284592"/>
    <lineage>
        <taxon>Eukaryota</taxon>
        <taxon>Fungi</taxon>
        <taxon>Dikarya</taxon>
        <taxon>Ascomycota</taxon>
        <taxon>Saccharomycotina</taxon>
        <taxon>Pichiomycetes</taxon>
        <taxon>Debaryomycetaceae</taxon>
        <taxon>Debaryomyces</taxon>
    </lineage>
</organism>
<proteinExistence type="inferred from homology"/>